<feature type="chain" id="PRO_0000271357" description="Proteasome assembly chaperone 3">
    <location>
        <begin position="1"/>
        <end position="122"/>
    </location>
</feature>
<feature type="modified residue" description="N-acetylmethionine" evidence="2">
    <location>
        <position position="1"/>
    </location>
</feature>
<accession>Q2NKS3</accession>
<reference key="1">
    <citation type="submission" date="2006-01" db="EMBL/GenBank/DDBJ databases">
        <authorList>
            <consortium name="NIH - Mammalian Gene Collection (MGC) project"/>
        </authorList>
    </citation>
    <scope>NUCLEOTIDE SEQUENCE [LARGE SCALE MRNA]</scope>
    <source>
        <strain>Hereford</strain>
        <tissue>Hypothalamus</tissue>
    </source>
</reference>
<keyword id="KW-0007">Acetylation</keyword>
<keyword id="KW-0143">Chaperone</keyword>
<keyword id="KW-1185">Reference proteome</keyword>
<protein>
    <recommendedName>
        <fullName>Proteasome assembly chaperone 3</fullName>
    </recommendedName>
</protein>
<comment type="function">
    <text>Chaperone protein which promotes assembly of the 20S proteasome. May cooperate with PSMG1-PSMG2 heterodimers to orchestrate the correct assembly of proteasomes.</text>
</comment>
<comment type="subunit">
    <text evidence="1">Homodimer. Interacts with PSMG4. Interacts directly with alpha and beta subunits of the 20S proteasome but dissociates before the formation of half-proteasomes, probably upon recruitment of POMP (By similarity).</text>
</comment>
<comment type="similarity">
    <text evidence="3">Belongs to the PSMG3 family.</text>
</comment>
<organism>
    <name type="scientific">Bos taurus</name>
    <name type="common">Bovine</name>
    <dbReference type="NCBI Taxonomy" id="9913"/>
    <lineage>
        <taxon>Eukaryota</taxon>
        <taxon>Metazoa</taxon>
        <taxon>Chordata</taxon>
        <taxon>Craniata</taxon>
        <taxon>Vertebrata</taxon>
        <taxon>Euteleostomi</taxon>
        <taxon>Mammalia</taxon>
        <taxon>Eutheria</taxon>
        <taxon>Laurasiatheria</taxon>
        <taxon>Artiodactyla</taxon>
        <taxon>Ruminantia</taxon>
        <taxon>Pecora</taxon>
        <taxon>Bovidae</taxon>
        <taxon>Bovinae</taxon>
        <taxon>Bos</taxon>
    </lineage>
</organism>
<dbReference type="EMBL" id="BC111670">
    <property type="protein sequence ID" value="AAI11671.1"/>
    <property type="molecule type" value="mRNA"/>
</dbReference>
<dbReference type="RefSeq" id="NP_001039524.1">
    <property type="nucleotide sequence ID" value="NM_001046059.2"/>
</dbReference>
<dbReference type="RefSeq" id="XP_005225127.1">
    <property type="nucleotide sequence ID" value="XM_005225070.5"/>
</dbReference>
<dbReference type="SMR" id="Q2NKS3"/>
<dbReference type="FunCoup" id="Q2NKS3">
    <property type="interactions" value="2427"/>
</dbReference>
<dbReference type="STRING" id="9913.ENSBTAP00000000055"/>
<dbReference type="PaxDb" id="9913-ENSBTAP00000000055"/>
<dbReference type="Ensembl" id="ENSBTAT00000000055.3">
    <property type="protein sequence ID" value="ENSBTAP00000000055.2"/>
    <property type="gene ID" value="ENSBTAG00000000050.3"/>
</dbReference>
<dbReference type="GeneID" id="510741"/>
<dbReference type="KEGG" id="bta:510741"/>
<dbReference type="CTD" id="84262"/>
<dbReference type="VEuPathDB" id="HostDB:ENSBTAG00000000050"/>
<dbReference type="VGNC" id="VGNC:33480">
    <property type="gene designation" value="PSMG3"/>
</dbReference>
<dbReference type="eggNOG" id="KOG4828">
    <property type="taxonomic scope" value="Eukaryota"/>
</dbReference>
<dbReference type="GeneTree" id="ENSGT00390000000324"/>
<dbReference type="HOGENOM" id="CLU_133503_1_0_1"/>
<dbReference type="InParanoid" id="Q2NKS3"/>
<dbReference type="OMA" id="IHVCAKN"/>
<dbReference type="OrthoDB" id="5839at2759"/>
<dbReference type="TreeFam" id="TF300294"/>
<dbReference type="Reactome" id="R-BTA-9907900">
    <property type="pathway name" value="Proteasome assembly"/>
</dbReference>
<dbReference type="Proteomes" id="UP000009136">
    <property type="component" value="Chromosome 25"/>
</dbReference>
<dbReference type="Bgee" id="ENSBTAG00000000050">
    <property type="expression patterns" value="Expressed in retina and 107 other cell types or tissues"/>
</dbReference>
<dbReference type="GO" id="GO:0032991">
    <property type="term" value="C:protein-containing complex"/>
    <property type="evidence" value="ECO:0007669"/>
    <property type="project" value="Ensembl"/>
</dbReference>
<dbReference type="GO" id="GO:0060090">
    <property type="term" value="F:molecular adaptor activity"/>
    <property type="evidence" value="ECO:0007669"/>
    <property type="project" value="Ensembl"/>
</dbReference>
<dbReference type="GO" id="GO:0044877">
    <property type="term" value="F:protein-containing complex binding"/>
    <property type="evidence" value="ECO:0007669"/>
    <property type="project" value="Ensembl"/>
</dbReference>
<dbReference type="GO" id="GO:0051131">
    <property type="term" value="P:chaperone-mediated protein complex assembly"/>
    <property type="evidence" value="ECO:0007669"/>
    <property type="project" value="Ensembl"/>
</dbReference>
<dbReference type="GO" id="GO:0043248">
    <property type="term" value="P:proteasome assembly"/>
    <property type="evidence" value="ECO:0007669"/>
    <property type="project" value="InterPro"/>
</dbReference>
<dbReference type="Gene3D" id="3.30.230.90">
    <property type="match status" value="1"/>
</dbReference>
<dbReference type="InterPro" id="IPR018788">
    <property type="entry name" value="Proteasome_assmbl_chp_3"/>
</dbReference>
<dbReference type="InterPro" id="IPR053720">
    <property type="entry name" value="Psm_Assembly_Chaperone"/>
</dbReference>
<dbReference type="PANTHER" id="PTHR31051">
    <property type="entry name" value="PROTEASOME ASSEMBLY CHAPERONE 3"/>
    <property type="match status" value="1"/>
</dbReference>
<dbReference type="PANTHER" id="PTHR31051:SF1">
    <property type="entry name" value="PROTEASOME ASSEMBLY CHAPERONE 3"/>
    <property type="match status" value="1"/>
</dbReference>
<dbReference type="Pfam" id="PF10178">
    <property type="entry name" value="PAC3"/>
    <property type="match status" value="1"/>
</dbReference>
<name>PSMG3_BOVIN</name>
<gene>
    <name type="primary">PSMG3</name>
</gene>
<evidence type="ECO:0000250" key="1"/>
<evidence type="ECO:0000250" key="2">
    <source>
        <dbReference type="UniProtKB" id="Q9BT73"/>
    </source>
</evidence>
<evidence type="ECO:0000305" key="3"/>
<sequence length="122" mass="12901">MEGKPLLTSKQKTAVVCGVPTQVVCTAFSSHILVVVTQLGKMGTLVSLEPSSVTSDVGKPVLTTKVLLGKDEPLVHVFAKNLVAFVSQEAGNRAVLLALATKDKSMEAVKALQEVIQACQVW</sequence>
<proteinExistence type="evidence at transcript level"/>